<comment type="function">
    <text evidence="1">Hydrolyzes both purine and pyrimidine ribonucleosides with a broad-substrate specificity.</text>
</comment>
<comment type="similarity">
    <text evidence="1">Belongs to the IUNH family. RihC subfamily.</text>
</comment>
<evidence type="ECO:0000255" key="1">
    <source>
        <dbReference type="HAMAP-Rule" id="MF_01432"/>
    </source>
</evidence>
<proteinExistence type="inferred from homology"/>
<protein>
    <recommendedName>
        <fullName evidence="1">Non-specific ribonucleoside hydrolase RihC</fullName>
        <ecNumber evidence="1">3.2.-.-</ecNumber>
    </recommendedName>
    <alternativeName>
        <fullName evidence="1">Purine/pyrimidine ribonucleoside hydrolase</fullName>
    </alternativeName>
</protein>
<reference key="1">
    <citation type="journal article" date="2008" name="J. Bacteriol.">
        <title>Insights into the environmental resistance gene pool from the genome sequence of the multidrug-resistant environmental isolate Escherichia coli SMS-3-5.</title>
        <authorList>
            <person name="Fricke W.F."/>
            <person name="Wright M.S."/>
            <person name="Lindell A.H."/>
            <person name="Harkins D.M."/>
            <person name="Baker-Austin C."/>
            <person name="Ravel J."/>
            <person name="Stepanauskas R."/>
        </authorList>
    </citation>
    <scope>NUCLEOTIDE SEQUENCE [LARGE SCALE GENOMIC DNA]</scope>
    <source>
        <strain>SMS-3-5 / SECEC</strain>
    </source>
</reference>
<accession>B1LFW0</accession>
<organism>
    <name type="scientific">Escherichia coli (strain SMS-3-5 / SECEC)</name>
    <dbReference type="NCBI Taxonomy" id="439855"/>
    <lineage>
        <taxon>Bacteria</taxon>
        <taxon>Pseudomonadati</taxon>
        <taxon>Pseudomonadota</taxon>
        <taxon>Gammaproteobacteria</taxon>
        <taxon>Enterobacterales</taxon>
        <taxon>Enterobacteriaceae</taxon>
        <taxon>Escherichia</taxon>
    </lineage>
</organism>
<sequence length="304" mass="32638">MRLPIFLDTDPGIDDAVAIAAAIFAPELDLQLMTTVAGNVSVEKTTRNALQLLHFWNAEIPLAQGAAVPLVRAPRNAASVHGESGMAGYDFVEHNRSPLDKPAFLAIRDALMRAPEPVTLVAIGPLTNIALLLSQCPECKQYIRRLVIMGGSAGRGNCTPNAEFNIAADPEAAACVFRSGIEIVMCGLDVTNQAILTPDYLATLPELNRTGKMLHALFSHYRSGSMQSGLRMHDLCAIAWLVRPDLFTLKPCFVAVETQGEFTSGTTVVDIDGCLSKPANVQVALDLDVKGFQQWVAEVLALAS</sequence>
<name>RIHC_ECOSM</name>
<dbReference type="EC" id="3.2.-.-" evidence="1"/>
<dbReference type="EMBL" id="CP000970">
    <property type="protein sequence ID" value="ACB16882.1"/>
    <property type="molecule type" value="Genomic_DNA"/>
</dbReference>
<dbReference type="RefSeq" id="WP_001239161.1">
    <property type="nucleotide sequence ID" value="NC_010498.1"/>
</dbReference>
<dbReference type="SMR" id="B1LFW0"/>
<dbReference type="KEGG" id="ecm:EcSMS35_0028"/>
<dbReference type="HOGENOM" id="CLU_036838_2_2_6"/>
<dbReference type="Proteomes" id="UP000007011">
    <property type="component" value="Chromosome"/>
</dbReference>
<dbReference type="GO" id="GO:0005829">
    <property type="term" value="C:cytosol"/>
    <property type="evidence" value="ECO:0007669"/>
    <property type="project" value="TreeGrafter"/>
</dbReference>
<dbReference type="GO" id="GO:0008477">
    <property type="term" value="F:purine nucleosidase activity"/>
    <property type="evidence" value="ECO:0007669"/>
    <property type="project" value="TreeGrafter"/>
</dbReference>
<dbReference type="GO" id="GO:0045437">
    <property type="term" value="F:uridine nucleosidase activity"/>
    <property type="evidence" value="ECO:0007669"/>
    <property type="project" value="UniProtKB-ARBA"/>
</dbReference>
<dbReference type="GO" id="GO:0006144">
    <property type="term" value="P:purine nucleobase metabolic process"/>
    <property type="evidence" value="ECO:0007669"/>
    <property type="project" value="UniProtKB-UniRule"/>
</dbReference>
<dbReference type="GO" id="GO:0006152">
    <property type="term" value="P:purine nucleoside catabolic process"/>
    <property type="evidence" value="ECO:0007669"/>
    <property type="project" value="TreeGrafter"/>
</dbReference>
<dbReference type="GO" id="GO:0006206">
    <property type="term" value="P:pyrimidine nucleobase metabolic process"/>
    <property type="evidence" value="ECO:0007669"/>
    <property type="project" value="UniProtKB-UniRule"/>
</dbReference>
<dbReference type="CDD" id="cd02651">
    <property type="entry name" value="nuc_hydro_IU_UC_XIUA"/>
    <property type="match status" value="1"/>
</dbReference>
<dbReference type="FunFam" id="3.90.245.10:FF:000002">
    <property type="entry name" value="Non-specific ribonucleoside hydrolase RihC"/>
    <property type="match status" value="1"/>
</dbReference>
<dbReference type="Gene3D" id="3.90.245.10">
    <property type="entry name" value="Ribonucleoside hydrolase-like"/>
    <property type="match status" value="1"/>
</dbReference>
<dbReference type="HAMAP" id="MF_01432">
    <property type="entry name" value="Nucleosid_hydro_RihC"/>
    <property type="match status" value="1"/>
</dbReference>
<dbReference type="InterPro" id="IPR015910">
    <property type="entry name" value="I/U_nuclsd_hydro_CS"/>
</dbReference>
<dbReference type="InterPro" id="IPR001910">
    <property type="entry name" value="Inosine/uridine_hydrolase_dom"/>
</dbReference>
<dbReference type="InterPro" id="IPR023186">
    <property type="entry name" value="IUNH"/>
</dbReference>
<dbReference type="InterPro" id="IPR022976">
    <property type="entry name" value="Nucleosid_hydro_RihC_nonspecif"/>
</dbReference>
<dbReference type="InterPro" id="IPR036452">
    <property type="entry name" value="Ribo_hydro-like"/>
</dbReference>
<dbReference type="NCBIfam" id="NF008036">
    <property type="entry name" value="PRK10768.1"/>
    <property type="match status" value="1"/>
</dbReference>
<dbReference type="PANTHER" id="PTHR12304">
    <property type="entry name" value="INOSINE-URIDINE PREFERRING NUCLEOSIDE HYDROLASE"/>
    <property type="match status" value="1"/>
</dbReference>
<dbReference type="PANTHER" id="PTHR12304:SF15">
    <property type="entry name" value="NON-SPECIFIC RIBONUCLEOSIDE HYDROLASE RIHC"/>
    <property type="match status" value="1"/>
</dbReference>
<dbReference type="Pfam" id="PF01156">
    <property type="entry name" value="IU_nuc_hydro"/>
    <property type="match status" value="1"/>
</dbReference>
<dbReference type="SUPFAM" id="SSF53590">
    <property type="entry name" value="Nucleoside hydrolase"/>
    <property type="match status" value="1"/>
</dbReference>
<dbReference type="PROSITE" id="PS01247">
    <property type="entry name" value="IUNH"/>
    <property type="match status" value="1"/>
</dbReference>
<keyword id="KW-0326">Glycosidase</keyword>
<keyword id="KW-0378">Hydrolase</keyword>
<gene>
    <name evidence="1" type="primary">rihC</name>
    <name type="ordered locus">EcSMS35_0028</name>
</gene>
<feature type="chain" id="PRO_1000145815" description="Non-specific ribonucleoside hydrolase RihC">
    <location>
        <begin position="1"/>
        <end position="304"/>
    </location>
</feature>
<feature type="active site" evidence="1">
    <location>
        <position position="233"/>
    </location>
</feature>